<gene>
    <name evidence="1" type="primary">tmk</name>
    <name type="ordered locus">BMA10229_A3388</name>
</gene>
<name>KTHY_BURM9</name>
<accession>A2SBK1</accession>
<organism>
    <name type="scientific">Burkholderia mallei (strain NCTC 10229)</name>
    <dbReference type="NCBI Taxonomy" id="412022"/>
    <lineage>
        <taxon>Bacteria</taxon>
        <taxon>Pseudomonadati</taxon>
        <taxon>Pseudomonadota</taxon>
        <taxon>Betaproteobacteria</taxon>
        <taxon>Burkholderiales</taxon>
        <taxon>Burkholderiaceae</taxon>
        <taxon>Burkholderia</taxon>
        <taxon>pseudomallei group</taxon>
    </lineage>
</organism>
<feature type="chain" id="PRO_1000023159" description="Thymidylate kinase">
    <location>
        <begin position="1"/>
        <end position="206"/>
    </location>
</feature>
<feature type="binding site" evidence="1">
    <location>
        <begin position="11"/>
        <end position="18"/>
    </location>
    <ligand>
        <name>ATP</name>
        <dbReference type="ChEBI" id="CHEBI:30616"/>
    </ligand>
</feature>
<keyword id="KW-0067">ATP-binding</keyword>
<keyword id="KW-0418">Kinase</keyword>
<keyword id="KW-0545">Nucleotide biosynthesis</keyword>
<keyword id="KW-0547">Nucleotide-binding</keyword>
<keyword id="KW-0808">Transferase</keyword>
<proteinExistence type="inferred from homology"/>
<sequence length="206" mass="23100">MARGKFITFEGIDGAGKTTHLQWFCDRLQERLGPTGRHVVVTREPGGTQLGETLREILLNQPMDLETEALLMFAGRREHLALVIEPALARGDWVVSDRFTDATFAYQGGGRGLPRDKLEALERWVQGGFQPDLTVLFDVQPQVASARRGAVRMPDKFESESDAFFARTRAEYLRRAHEAPHRFAIVDSSESIPQIRKQLEGVLAAL</sequence>
<evidence type="ECO:0000255" key="1">
    <source>
        <dbReference type="HAMAP-Rule" id="MF_00165"/>
    </source>
</evidence>
<dbReference type="EC" id="2.7.4.9" evidence="1"/>
<dbReference type="EMBL" id="CP000546">
    <property type="protein sequence ID" value="ABN03818.1"/>
    <property type="molecule type" value="Genomic_DNA"/>
</dbReference>
<dbReference type="RefSeq" id="WP_004193022.1">
    <property type="nucleotide sequence ID" value="NC_008836.1"/>
</dbReference>
<dbReference type="SMR" id="A2SBK1"/>
<dbReference type="GeneID" id="92979159"/>
<dbReference type="KEGG" id="bml:BMA10229_A3388"/>
<dbReference type="HOGENOM" id="CLU_049131_0_2_4"/>
<dbReference type="Proteomes" id="UP000002283">
    <property type="component" value="Chromosome I"/>
</dbReference>
<dbReference type="GO" id="GO:0005829">
    <property type="term" value="C:cytosol"/>
    <property type="evidence" value="ECO:0007669"/>
    <property type="project" value="TreeGrafter"/>
</dbReference>
<dbReference type="GO" id="GO:0005524">
    <property type="term" value="F:ATP binding"/>
    <property type="evidence" value="ECO:0007669"/>
    <property type="project" value="UniProtKB-UniRule"/>
</dbReference>
<dbReference type="GO" id="GO:0004798">
    <property type="term" value="F:dTMP kinase activity"/>
    <property type="evidence" value="ECO:0007669"/>
    <property type="project" value="UniProtKB-UniRule"/>
</dbReference>
<dbReference type="GO" id="GO:0006233">
    <property type="term" value="P:dTDP biosynthetic process"/>
    <property type="evidence" value="ECO:0007669"/>
    <property type="project" value="InterPro"/>
</dbReference>
<dbReference type="GO" id="GO:0006235">
    <property type="term" value="P:dTTP biosynthetic process"/>
    <property type="evidence" value="ECO:0007669"/>
    <property type="project" value="UniProtKB-UniRule"/>
</dbReference>
<dbReference type="GO" id="GO:0006227">
    <property type="term" value="P:dUDP biosynthetic process"/>
    <property type="evidence" value="ECO:0007669"/>
    <property type="project" value="TreeGrafter"/>
</dbReference>
<dbReference type="CDD" id="cd01672">
    <property type="entry name" value="TMPK"/>
    <property type="match status" value="1"/>
</dbReference>
<dbReference type="FunFam" id="3.40.50.300:FF:000225">
    <property type="entry name" value="Thymidylate kinase"/>
    <property type="match status" value="1"/>
</dbReference>
<dbReference type="Gene3D" id="3.40.50.300">
    <property type="entry name" value="P-loop containing nucleotide triphosphate hydrolases"/>
    <property type="match status" value="1"/>
</dbReference>
<dbReference type="HAMAP" id="MF_00165">
    <property type="entry name" value="Thymidylate_kinase"/>
    <property type="match status" value="1"/>
</dbReference>
<dbReference type="InterPro" id="IPR027417">
    <property type="entry name" value="P-loop_NTPase"/>
</dbReference>
<dbReference type="InterPro" id="IPR039430">
    <property type="entry name" value="Thymidylate_kin-like_dom"/>
</dbReference>
<dbReference type="InterPro" id="IPR018094">
    <property type="entry name" value="Thymidylate_kinase"/>
</dbReference>
<dbReference type="NCBIfam" id="TIGR00041">
    <property type="entry name" value="DTMP_kinase"/>
    <property type="match status" value="1"/>
</dbReference>
<dbReference type="PANTHER" id="PTHR10344">
    <property type="entry name" value="THYMIDYLATE KINASE"/>
    <property type="match status" value="1"/>
</dbReference>
<dbReference type="PANTHER" id="PTHR10344:SF4">
    <property type="entry name" value="UMP-CMP KINASE 2, MITOCHONDRIAL"/>
    <property type="match status" value="1"/>
</dbReference>
<dbReference type="Pfam" id="PF02223">
    <property type="entry name" value="Thymidylate_kin"/>
    <property type="match status" value="1"/>
</dbReference>
<dbReference type="SUPFAM" id="SSF52540">
    <property type="entry name" value="P-loop containing nucleoside triphosphate hydrolases"/>
    <property type="match status" value="1"/>
</dbReference>
<comment type="function">
    <text evidence="1">Phosphorylation of dTMP to form dTDP in both de novo and salvage pathways of dTTP synthesis.</text>
</comment>
<comment type="catalytic activity">
    <reaction evidence="1">
        <text>dTMP + ATP = dTDP + ADP</text>
        <dbReference type="Rhea" id="RHEA:13517"/>
        <dbReference type="ChEBI" id="CHEBI:30616"/>
        <dbReference type="ChEBI" id="CHEBI:58369"/>
        <dbReference type="ChEBI" id="CHEBI:63528"/>
        <dbReference type="ChEBI" id="CHEBI:456216"/>
        <dbReference type="EC" id="2.7.4.9"/>
    </reaction>
</comment>
<comment type="similarity">
    <text evidence="1">Belongs to the thymidylate kinase family.</text>
</comment>
<reference key="1">
    <citation type="journal article" date="2010" name="Genome Biol. Evol.">
        <title>Continuing evolution of Burkholderia mallei through genome reduction and large-scale rearrangements.</title>
        <authorList>
            <person name="Losada L."/>
            <person name="Ronning C.M."/>
            <person name="DeShazer D."/>
            <person name="Woods D."/>
            <person name="Fedorova N."/>
            <person name="Kim H.S."/>
            <person name="Shabalina S.A."/>
            <person name="Pearson T.R."/>
            <person name="Brinkac L."/>
            <person name="Tan P."/>
            <person name="Nandi T."/>
            <person name="Crabtree J."/>
            <person name="Badger J."/>
            <person name="Beckstrom-Sternberg S."/>
            <person name="Saqib M."/>
            <person name="Schutzer S.E."/>
            <person name="Keim P."/>
            <person name="Nierman W.C."/>
        </authorList>
    </citation>
    <scope>NUCLEOTIDE SEQUENCE [LARGE SCALE GENOMIC DNA]</scope>
    <source>
        <strain>NCTC 10229</strain>
    </source>
</reference>
<protein>
    <recommendedName>
        <fullName evidence="1">Thymidylate kinase</fullName>
        <ecNumber evidence="1">2.7.4.9</ecNumber>
    </recommendedName>
    <alternativeName>
        <fullName evidence="1">dTMP kinase</fullName>
    </alternativeName>
</protein>